<reference key="1">
    <citation type="journal article" date="1988" name="Cell">
        <title>The C. elegans cell lineage and differentiation gene unc-86 encodes a protein with a homeodomain and extended similarity to transcription factors.</title>
        <authorList>
            <person name="Finney M."/>
            <person name="Ruvkun G."/>
            <person name="Horvitz H.R."/>
        </authorList>
    </citation>
    <scope>NUCLEOTIDE SEQUENCE [GENOMIC DNA] (ISOFORMS A AND B)</scope>
</reference>
<reference key="2">
    <citation type="journal article" date="1994" name="Nature">
        <title>2.2 Mb of contiguous nucleotide sequence from chromosome III of C. elegans.</title>
        <authorList>
            <person name="Wilson R."/>
            <person name="Ainscough R."/>
            <person name="Anderson K."/>
            <person name="Baynes C."/>
            <person name="Berks M."/>
            <person name="Bonfield J."/>
            <person name="Burton J."/>
            <person name="Connell M."/>
            <person name="Copsey T."/>
            <person name="Cooper J."/>
            <person name="Coulson A."/>
            <person name="Craxton M."/>
            <person name="Dear S."/>
            <person name="Du Z."/>
            <person name="Durbin R."/>
            <person name="Favello A."/>
            <person name="Fraser A."/>
            <person name="Fulton L."/>
            <person name="Gardner A."/>
            <person name="Green P."/>
            <person name="Hawkins T."/>
            <person name="Hillier L."/>
            <person name="Jier M."/>
            <person name="Johnston L."/>
            <person name="Jones M."/>
            <person name="Kershaw J."/>
            <person name="Kirsten J."/>
            <person name="Laisster N."/>
            <person name="Latreille P."/>
            <person name="Lightning J."/>
            <person name="Lloyd C."/>
            <person name="Mortimore B."/>
            <person name="O'Callaghan M."/>
            <person name="Parsons J."/>
            <person name="Percy C."/>
            <person name="Rifken L."/>
            <person name="Roopra A."/>
            <person name="Saunders D."/>
            <person name="Shownkeen R."/>
            <person name="Sims M."/>
            <person name="Smaldon N."/>
            <person name="Smith A."/>
            <person name="Smith M."/>
            <person name="Sonnhammer E."/>
            <person name="Staden R."/>
            <person name="Sulston J."/>
            <person name="Thierry-Mieg J."/>
            <person name="Thomas K."/>
            <person name="Vaudin M."/>
            <person name="Vaughan K."/>
            <person name="Waterston R."/>
            <person name="Watson A."/>
            <person name="Weinstock L."/>
            <person name="Wilkinson-Sproat J."/>
            <person name="Wohldman P."/>
        </authorList>
    </citation>
    <scope>NUCLEOTIDE SEQUENCE [GENOMIC DNA]</scope>
    <scope>ALTERNATIVE SPLICING</scope>
    <source>
        <strain>Bristol N2</strain>
    </source>
</reference>
<reference key="3">
    <citation type="journal article" date="1998" name="Science">
        <title>Genome sequence of the nematode C. elegans: a platform for investigating biology.</title>
        <authorList>
            <consortium name="The C. elegans sequencing consortium"/>
        </authorList>
    </citation>
    <scope>NUCLEOTIDE SEQUENCE [LARGE SCALE GENOMIC DNA]</scope>
    <source>
        <strain>Bristol N2</strain>
    </source>
</reference>
<reference key="4">
    <citation type="journal article" date="1981" name="Cell">
        <title>Mutations that lead to reiterations in the cell lineages of C. elegans.</title>
        <authorList>
            <person name="Chalfie M."/>
            <person name="Horvitz H.R."/>
            <person name="Sulston J.E."/>
        </authorList>
    </citation>
    <scope>FUNCTION</scope>
    <scope>DISRUPTION PHENOTYPE</scope>
    <source>
        <strain>Bristol N2</strain>
    </source>
</reference>
<reference key="5">
    <citation type="journal article" date="1990" name="Cell">
        <title>The unc-86 gene product couples cell lineage and cell identity in C. elegans.</title>
        <authorList>
            <person name="Finney M."/>
            <person name="Ruvkun G."/>
        </authorList>
    </citation>
    <scope>FUNCTION</scope>
    <scope>SUBCELLULAR LOCATION</scope>
    <scope>TISSUE SPECIFICITY</scope>
    <scope>DEVELOPMENTAL STAGE</scope>
</reference>
<reference key="6">
    <citation type="journal article" date="1992" name="EMBO J.">
        <title>Regulation of the mec-3 gene by the C.elegans homeoproteins UNC-86 and MEC-3.</title>
        <authorList>
            <person name="Xue D."/>
            <person name="Finney M."/>
            <person name="Ruvkun G."/>
            <person name="Chalfie M."/>
        </authorList>
    </citation>
    <scope>FUNCTION</scope>
</reference>
<reference key="7">
    <citation type="journal article" date="1998" name="Development">
        <title>Regulation of touch receptor differentiation by the Caenorhabditis elegans mec-3 and unc-86 genes.</title>
        <authorList>
            <person name="Duggan A."/>
            <person name="Ma C."/>
            <person name="Chalfie M."/>
        </authorList>
    </citation>
    <scope>FUNCTION</scope>
    <scope>SUBUNIT</scope>
    <source>
        <strain>Bristol N2</strain>
    </source>
</reference>
<reference key="8">
    <citation type="journal article" date="2000" name="EMBO J.">
        <title>Protein interaction surface of the POU transcription factor UNC-86 selectively used in touch neurons.</title>
        <authorList>
            <person name="Rohrig S."/>
            <person name="Rockelein I."/>
            <person name="Donhauser R."/>
            <person name="Baumeister R."/>
        </authorList>
    </citation>
    <scope>FUNCTION</scope>
    <scope>SUBUNIT</scope>
    <scope>DISRUPTION PHENOTYPE</scope>
    <scope>MUTAGENESIS OF PRO-160 AND LEU-210</scope>
</reference>
<reference key="9">
    <citation type="journal article" date="2002" name="Development">
        <title>The C. elegans POU-domain transcription factor UNC-86 regulates the tph-1 tryptophan hydroxylase gene and neurite outgrowth in specific serotonergic neurons.</title>
        <authorList>
            <person name="Sze J.Y."/>
            <person name="Zhang S."/>
            <person name="Li J."/>
            <person name="Ruvkun G."/>
        </authorList>
    </citation>
    <scope>FUNCTION</scope>
    <scope>DISRUPTION PHENOTYPE</scope>
    <source>
        <strain>Bristol N2</strain>
    </source>
</reference>
<reference key="10">
    <citation type="journal article" date="2002" name="Genes Dev.">
        <title>Control of neuronal subtype identity by the C. elegans ARID protein CFI-1.</title>
        <authorList>
            <person name="Shaham S."/>
            <person name="Bargmann C.I."/>
        </authorList>
    </citation>
    <scope>FUNCTION</scope>
    <scope>TISSUE SPECIFICITY</scope>
    <source>
        <strain>Bristol N2</strain>
    </source>
</reference>
<reference key="11">
    <citation type="journal article" date="2003" name="Proc. Natl. Acad. Sci. U.S.A.">
        <title>Activity of the Caenorhabditis elegans UNC-86 POU transcription factor modulates olfactory sensitivity.</title>
        <authorList>
            <person name="Sze J.Y."/>
            <person name="Ruvkun G."/>
        </authorList>
    </citation>
    <scope>FUNCTION</scope>
    <scope>TISSUE SPECIFICITY</scope>
    <scope>DISRUPTION PHENOTYPE</scope>
</reference>
<reference key="12">
    <citation type="journal article" date="2005" name="Curr. Biol.">
        <title>MBR-1, a novel helix-turn-helix transcription factor, is required for pruning excessive neurites in Caenorhabditis elegans.</title>
        <authorList>
            <person name="Kage E."/>
            <person name="Hayashi Y."/>
            <person name="Takeuchi H."/>
            <person name="Hirotsu T."/>
            <person name="Kunitomo H."/>
            <person name="Inoue T."/>
            <person name="Arai H."/>
            <person name="Iino Y."/>
            <person name="Kubo T."/>
        </authorList>
    </citation>
    <scope>FUNCTION</scope>
    <source>
        <strain>Bristol N2</strain>
    </source>
</reference>
<reference key="13">
    <citation type="journal article" date="2011" name="Dev. Dyn.">
        <title>The POU transcription factor UNC-86 controls the timing and ventral guidance of Caenorhabditis elegans axon growth.</title>
        <authorList>
            <person name="Olsson-Carter K."/>
            <person name="Slack F.J."/>
        </authorList>
    </citation>
    <scope>FUNCTION</scope>
    <scope>DISRUPTION PHENOTYPE</scope>
    <source>
        <strain>Bristol N2</strain>
    </source>
</reference>
<reference key="14">
    <citation type="journal article" date="2013" name="Curr. Biol.">
        <title>Dauer-specific dendrite arborization in C. elegans is regulated by KPC-1/Furin.</title>
        <authorList>
            <person name="Schroeder N.E."/>
            <person name="Androwski R.J."/>
            <person name="Rashid A."/>
            <person name="Lee H."/>
            <person name="Lee J."/>
            <person name="Barr M.M."/>
        </authorList>
    </citation>
    <scope>FUNCTION</scope>
    <source>
        <strain>Bristol N2</strain>
    </source>
</reference>
<reference key="15">
    <citation type="journal article" date="2014" name="Development">
        <title>The LIM and POU homeobox genes ttx-3 and unc-86 act as terminal selectors in distinct cholinergic and serotonergic neuron types.</title>
        <authorList>
            <person name="Zhang F."/>
            <person name="Bhattacharya A."/>
            <person name="Nelson J.C."/>
            <person name="Abe N."/>
            <person name="Gordon P."/>
            <person name="Lloret-Fernandez C."/>
            <person name="Maicas M."/>
            <person name="Flames N."/>
            <person name="Mann R.S."/>
            <person name="Colon-Ramos D.A."/>
            <person name="Hobert O."/>
        </authorList>
    </citation>
    <scope>FUNCTION</scope>
    <scope>DNA-BINDING</scope>
    <scope>DISRUPTION PHENOTYPE</scope>
</reference>
<reference key="16">
    <citation type="journal article" date="2015" name="Dev. Cell">
        <title>A competition mechanism for a homeotic neuron identity transformation in C. elegans.</title>
        <authorList>
            <person name="Gordon P.M."/>
            <person name="Hobert O."/>
        </authorList>
    </citation>
    <scope>FUNCTION</scope>
    <scope>MUTAGENESIS OF LEU-210</scope>
</reference>
<comment type="function">
    <text evidence="3 4 5 6 7 8 9 10 11 12 14 15">Transcription factor required for correct cell fate determination and differentiation in diverse neuronal cell lineages where it plays a role in specifying the fate of daughter cells during cell divisions (PubMed:10899123, PubMed:2257628, PubMed:26096732, PubMed:7237544). Involved in sensory neuron production and function (PubMed:10899123, PubMed:1361171, PubMed:26096732, PubMed:9735371). Binds both alone and with mec-3 to the mec-3 promoter to initiate and maintain mec-3 expression which is required for sensory neuron differentiation (PubMed:1361171, PubMed:9735371). In addition, binds both alone and with mec-3 to the promoters of mec-4 and mec-7 which act to regulate sensory neuron function (PubMed:10899123, PubMed:9735371). Involved in determining the identity of the serotonergic NSM neurons and the cholinergic IL2 sensory and URA motor neurons (PubMed:24353061). Promotes expression of the cfi-1 transcription factor in the URA and IL2 neurons which in turn activates normal URA and IL2 gene expression (PubMed:11959845, PubMed:24353061). Required to determine the identity of BDU sensory neurons in concert with transcription factor unc-86, regulating expression of a number of genes, including transcription factors ceh-14 and ahr-1, neuropeptides flp-10, nlp-1 and nlp-15, and tyramine receptor-encoding ser-2 (PubMed:26096732). Regulates expression of a number of genes in NSM neurons including bas-1, cat-1, dop-3, mgl-3, nlp-13, scd-2 and ptps-1 (PubMed:24353061). In the IL2 neurons, required for expression of cho-1, gcy-19, klp-6, lag-2, unc-5 and unc-17 (PubMed:24353061). Promotes expression of pkd-2 in the male-specific CEM head neurons (PubMed:11959845). Required for dauer-specific branching of IL2Q neurons and nictation behavior (PubMed:23932402). Controls both the timing and direction of axon outgrowth in HSN neurons (PubMed:21656875). Plays a role in serotonin production by regulating expression of the tryptophan hydrolase tph-1 which catalyzes serotonin synthesis, in the AIM, NSM, HSN and RIH neurons (PubMed:12135927). Involved in regulation of lin-11 expression in the AIZ interneurons, the major interneurons of the olfactory pathway, and is required for odortaxis behavior (PubMed:12883006). Involved in neurite pruning between AIM neurons during larval development by regulating the expression of transcription factor mbr-1 (PubMed:16139210). Required for correct localization of unc-40 (PubMed:24353061).</text>
</comment>
<comment type="subunit">
    <text evidence="3 15">Interacts with mec-3; the heterooligomer binds to the promoters of mec-3, mec-4 and mec-7.</text>
</comment>
<comment type="subcellular location">
    <subcellularLocation>
        <location evidence="1 2 10">Nucleus</location>
    </subcellularLocation>
</comment>
<comment type="alternative products">
    <event type="alternative splicing"/>
    <isoform>
        <id>P13528-1</id>
        <name>b</name>
        <sequence type="displayed"/>
    </isoform>
    <isoform>
        <id>P13528-2</id>
        <name>a</name>
        <sequence type="described" ref="VSP_002344"/>
    </isoform>
</comment>
<comment type="tissue specificity">
    <text evidence="4 6 10">Specific to neurons and neuroblasts. Expressed in CEM head neurons and in IL2, URA, URB, URX and URY neurons. Not expressed in olfactory sensory neurons but expressed in AIZ interneurons.</text>
</comment>
<comment type="developmental stage">
    <text evidence="10">First appears during embryogenesis and persists throughout adulthood.</text>
</comment>
<comment type="disruption phenotype">
    <text evidence="3 5 6 9 12 14">In a number of neuronal cell lineages, one of the two daughter cells of a division fails to assume its normal fate, retaining instead the fate of its parent cell. Altered gene expression in a number of neuron types including reduced cat-1 expression in AIM, NSM, HSN and RIH neurons, loss of cat-4 expression in HSN neurons, loss of expression of dop-3 and mgl-3 and reduced expression of bas-1, nlp-13, ptpa-1 and scd-2 in NSM neurons, loss of expression of gcy-19, klp-6, lag-2 and unc-17 and reduced expression of cho-1 and unc-5 in IL2 neurons, and loss of tph-1 expression in AIM, NSM, HSN and RIH neurons which leads to defects in serotonin production. Defective motility along with defects in IL2Q dendritic arborization and nictation. Abnormal neurite outgrowth in NSM neurons. Defective response to odor attractants but odor repellants are avoided normally. Penetrant ventral axon growth defects in HSN motor neurons with extension of processes in L1, three stages earlier than wild-type. Incorrect unc-40 localization. Defective egg-laying characterized by retention of substantially more eggs in the uterus of second-day animals than the wild-type.</text>
</comment>
<comment type="similarity">
    <text evidence="16">Belongs to the POU transcription factor family. Class-4 subfamily.</text>
</comment>
<comment type="sequence caution" evidence="16">
    <conflict type="erroneous gene model prediction">
        <sequence resource="EMBL-CDS" id="AAA28158"/>
    </conflict>
</comment>
<comment type="sequence caution" evidence="16">
    <conflict type="erroneous gene model prediction">
        <sequence resource="EMBL-CDS" id="AAA28159"/>
    </conflict>
</comment>
<name>UNC86_CAEEL</name>
<evidence type="ECO:0000255" key="1">
    <source>
        <dbReference type="PROSITE-ProRule" id="PRU00108"/>
    </source>
</evidence>
<evidence type="ECO:0000255" key="2">
    <source>
        <dbReference type="PROSITE-ProRule" id="PRU00530"/>
    </source>
</evidence>
<evidence type="ECO:0000269" key="3">
    <source>
    </source>
</evidence>
<evidence type="ECO:0000269" key="4">
    <source>
    </source>
</evidence>
<evidence type="ECO:0000269" key="5">
    <source>
    </source>
</evidence>
<evidence type="ECO:0000269" key="6">
    <source>
    </source>
</evidence>
<evidence type="ECO:0000269" key="7">
    <source>
    </source>
</evidence>
<evidence type="ECO:0000269" key="8">
    <source>
    </source>
</evidence>
<evidence type="ECO:0000269" key="9">
    <source>
    </source>
</evidence>
<evidence type="ECO:0000269" key="10">
    <source>
    </source>
</evidence>
<evidence type="ECO:0000269" key="11">
    <source>
    </source>
</evidence>
<evidence type="ECO:0000269" key="12">
    <source>
    </source>
</evidence>
<evidence type="ECO:0000269" key="13">
    <source>
    </source>
</evidence>
<evidence type="ECO:0000269" key="14">
    <source>
    </source>
</evidence>
<evidence type="ECO:0000269" key="15">
    <source>
    </source>
</evidence>
<evidence type="ECO:0000305" key="16"/>
<feature type="chain" id="PRO_0000100780" description="Transcription factor unc-86">
    <location>
        <begin position="1"/>
        <end position="357"/>
    </location>
</feature>
<feature type="domain" description="POU-specific" evidence="2">
    <location>
        <begin position="155"/>
        <end position="232"/>
    </location>
</feature>
<feature type="DNA-binding region" description="Homeobox" evidence="1">
    <location>
        <begin position="253"/>
        <end position="312"/>
    </location>
</feature>
<feature type="short sequence motif" description="POU-IV box">
    <location>
        <begin position="35"/>
        <end position="44"/>
    </location>
</feature>
<feature type="splice variant" id="VSP_002344" description="In isoform a." evidence="16">
    <location>
        <begin position="1"/>
        <end position="56"/>
    </location>
</feature>
<feature type="mutagenesis site" description="In u168; defective mechanosensation, lack of interaction with mec-3 and lack of maintained mec-3 gene expression. No egg-laying or Q neuroblast lineage defects." evidence="3">
    <original>P</original>
    <variation>S</variation>
    <location>
        <position position="160"/>
    </location>
</feature>
<feature type="mutagenesis site" description="In u5; defective mechanosensation, lack of interaction with mec-3 and lack of maintained mec-3 gene expression. No egg-laying or Q neuroblast lineage defects. Abolishes expression of ALM neuron-specific genes mec-17 and mec-4. Abnormal, ectopic expression of BDU-specific genes ceh-14, flp-10 and zig-3 in ALM." evidence="3 13">
    <original>L</original>
    <variation>F</variation>
    <location>
        <position position="210"/>
    </location>
</feature>
<gene>
    <name type="primary">unc-86</name>
    <name type="ORF">C30A5.7</name>
</gene>
<organism>
    <name type="scientific">Caenorhabditis elegans</name>
    <dbReference type="NCBI Taxonomy" id="6239"/>
    <lineage>
        <taxon>Eukaryota</taxon>
        <taxon>Metazoa</taxon>
        <taxon>Ecdysozoa</taxon>
        <taxon>Nematoda</taxon>
        <taxon>Chromadorea</taxon>
        <taxon>Rhabditida</taxon>
        <taxon>Rhabditina</taxon>
        <taxon>Rhabditomorpha</taxon>
        <taxon>Rhabditoidea</taxon>
        <taxon>Rhabditidae</taxon>
        <taxon>Peloderinae</taxon>
        <taxon>Caenorhabditis</taxon>
    </lineage>
</organism>
<accession>P13528</accession>
<accession>D7SFI2</accession>
<dbReference type="EMBL" id="M22363">
    <property type="protein sequence ID" value="AAA28158.1"/>
    <property type="status" value="ALT_SEQ"/>
    <property type="molecule type" value="Genomic_DNA"/>
</dbReference>
<dbReference type="EMBL" id="M22363">
    <property type="protein sequence ID" value="AAA28159.1"/>
    <property type="status" value="ALT_SEQ"/>
    <property type="molecule type" value="Genomic_DNA"/>
</dbReference>
<dbReference type="EMBL" id="BX284603">
    <property type="protein sequence ID" value="CCD62655.2"/>
    <property type="molecule type" value="Genomic_DNA"/>
</dbReference>
<dbReference type="EMBL" id="BX284603">
    <property type="protein sequence ID" value="CCD62656.1"/>
    <property type="molecule type" value="Genomic_DNA"/>
</dbReference>
<dbReference type="PIR" id="A30042">
    <property type="entry name" value="A30042"/>
</dbReference>
<dbReference type="PIR" id="S44778">
    <property type="entry name" value="S44778"/>
</dbReference>
<dbReference type="RefSeq" id="NP_001021191.2">
    <molecule id="P13528-1"/>
    <property type="nucleotide sequence ID" value="NM_001026020.7"/>
</dbReference>
<dbReference type="RefSeq" id="NP_001309473.1">
    <molecule id="P13528-2"/>
    <property type="nucleotide sequence ID" value="NM_001322687.4"/>
</dbReference>
<dbReference type="SMR" id="P13528"/>
<dbReference type="BioGRID" id="41362">
    <property type="interactions" value="3"/>
</dbReference>
<dbReference type="FunCoup" id="P13528">
    <property type="interactions" value="84"/>
</dbReference>
<dbReference type="IntAct" id="P13528">
    <property type="interactions" value="1"/>
</dbReference>
<dbReference type="STRING" id="6239.C30A5.7b.1"/>
<dbReference type="PaxDb" id="6239-C30A5.7b"/>
<dbReference type="EnsemblMetazoa" id="C30A5.7a.1">
    <molecule id="P13528-2"/>
    <property type="protein sequence ID" value="C30A5.7a.1"/>
    <property type="gene ID" value="WBGene00006818"/>
</dbReference>
<dbReference type="EnsemblMetazoa" id="C30A5.7b.1">
    <molecule id="P13528-1"/>
    <property type="protein sequence ID" value="C30A5.7b.1"/>
    <property type="gene ID" value="WBGene00006818"/>
</dbReference>
<dbReference type="GeneID" id="176157"/>
<dbReference type="KEGG" id="cel:CELE_C30A5.7"/>
<dbReference type="UCSC" id="C30A5.7b">
    <molecule id="P13528-1"/>
    <property type="organism name" value="c. elegans"/>
</dbReference>
<dbReference type="AGR" id="WB:WBGene00006818"/>
<dbReference type="CTD" id="176157"/>
<dbReference type="WormBase" id="C30A5.7a">
    <molecule id="P13528-2"/>
    <property type="protein sequence ID" value="CE51471"/>
    <property type="gene ID" value="WBGene00006818"/>
    <property type="gene designation" value="unc-86"/>
</dbReference>
<dbReference type="WormBase" id="C30A5.7b">
    <molecule id="P13528-1"/>
    <property type="protein sequence ID" value="CE45067"/>
    <property type="gene ID" value="WBGene00006818"/>
    <property type="gene designation" value="unc-86"/>
</dbReference>
<dbReference type="eggNOG" id="KOG1168">
    <property type="taxonomic scope" value="Eukaryota"/>
</dbReference>
<dbReference type="GeneTree" id="ENSGT00940000169264"/>
<dbReference type="InParanoid" id="P13528"/>
<dbReference type="OMA" id="NPLMRPH"/>
<dbReference type="OrthoDB" id="6358449at2759"/>
<dbReference type="PhylomeDB" id="P13528"/>
<dbReference type="SignaLink" id="P13528"/>
<dbReference type="PRO" id="PR:P13528"/>
<dbReference type="Proteomes" id="UP000001940">
    <property type="component" value="Chromosome III"/>
</dbReference>
<dbReference type="Bgee" id="WBGene00006818">
    <property type="expression patterns" value="Expressed in pharyngeal muscle cell (C elegans) and 3 other cell types or tissues"/>
</dbReference>
<dbReference type="GO" id="GO:0005634">
    <property type="term" value="C:nucleus"/>
    <property type="evidence" value="ECO:0000314"/>
    <property type="project" value="WormBase"/>
</dbReference>
<dbReference type="GO" id="GO:0090575">
    <property type="term" value="C:RNA polymerase II transcription regulator complex"/>
    <property type="evidence" value="ECO:0000314"/>
    <property type="project" value="UniProtKB"/>
</dbReference>
<dbReference type="GO" id="GO:0001228">
    <property type="term" value="F:DNA-binding transcription activator activity, RNA polymerase II-specific"/>
    <property type="evidence" value="ECO:0000314"/>
    <property type="project" value="UniProtKB"/>
</dbReference>
<dbReference type="GO" id="GO:0000981">
    <property type="term" value="F:DNA-binding transcription factor activity, RNA polymerase II-specific"/>
    <property type="evidence" value="ECO:0000314"/>
    <property type="project" value="WormBase"/>
</dbReference>
<dbReference type="GO" id="GO:0000978">
    <property type="term" value="F:RNA polymerase II cis-regulatory region sequence-specific DNA binding"/>
    <property type="evidence" value="ECO:0000318"/>
    <property type="project" value="GO_Central"/>
</dbReference>
<dbReference type="GO" id="GO:0000977">
    <property type="term" value="F:RNA polymerase II transcription regulatory region sequence-specific DNA binding"/>
    <property type="evidence" value="ECO:0000314"/>
    <property type="project" value="UniProtKB"/>
</dbReference>
<dbReference type="GO" id="GO:0061629">
    <property type="term" value="F:RNA polymerase II-specific DNA-binding transcription factor binding"/>
    <property type="evidence" value="ECO:0000353"/>
    <property type="project" value="UniProtKB"/>
</dbReference>
<dbReference type="GO" id="GO:0043565">
    <property type="term" value="F:sequence-specific DNA binding"/>
    <property type="evidence" value="ECO:0000314"/>
    <property type="project" value="WormBase"/>
</dbReference>
<dbReference type="GO" id="GO:0007638">
    <property type="term" value="P:mechanosensory behavior"/>
    <property type="evidence" value="ECO:0000315"/>
    <property type="project" value="WormBase"/>
</dbReference>
<dbReference type="GO" id="GO:0048666">
    <property type="term" value="P:neuron development"/>
    <property type="evidence" value="ECO:0000315"/>
    <property type="project" value="WormBase"/>
</dbReference>
<dbReference type="GO" id="GO:0048665">
    <property type="term" value="P:neuron fate specification"/>
    <property type="evidence" value="ECO:0000315"/>
    <property type="project" value="WormBase"/>
</dbReference>
<dbReference type="GO" id="GO:0045944">
    <property type="term" value="P:positive regulation of transcription by RNA polymerase II"/>
    <property type="evidence" value="ECO:0000314"/>
    <property type="project" value="UniProtKB"/>
</dbReference>
<dbReference type="GO" id="GO:0006357">
    <property type="term" value="P:regulation of transcription by RNA polymerase II"/>
    <property type="evidence" value="ECO:0000318"/>
    <property type="project" value="GO_Central"/>
</dbReference>
<dbReference type="GO" id="GO:0009612">
    <property type="term" value="P:response to mechanical stimulus"/>
    <property type="evidence" value="ECO:0000315"/>
    <property type="project" value="WormBase"/>
</dbReference>
<dbReference type="GO" id="GO:0007608">
    <property type="term" value="P:sensory perception of smell"/>
    <property type="evidence" value="ECO:0007669"/>
    <property type="project" value="UniProtKB-KW"/>
</dbReference>
<dbReference type="CDD" id="cd00086">
    <property type="entry name" value="homeodomain"/>
    <property type="match status" value="1"/>
</dbReference>
<dbReference type="FunFam" id="1.10.10.60:FF:000230">
    <property type="entry name" value="POU domain protein"/>
    <property type="match status" value="1"/>
</dbReference>
<dbReference type="FunFam" id="1.10.260.40:FF:000007">
    <property type="entry name" value="POU domain protein"/>
    <property type="match status" value="1"/>
</dbReference>
<dbReference type="Gene3D" id="1.10.10.60">
    <property type="entry name" value="Homeodomain-like"/>
    <property type="match status" value="1"/>
</dbReference>
<dbReference type="Gene3D" id="1.10.260.40">
    <property type="entry name" value="lambda repressor-like DNA-binding domains"/>
    <property type="match status" value="1"/>
</dbReference>
<dbReference type="InterPro" id="IPR001356">
    <property type="entry name" value="HD"/>
</dbReference>
<dbReference type="InterPro" id="IPR017970">
    <property type="entry name" value="Homeobox_CS"/>
</dbReference>
<dbReference type="InterPro" id="IPR009057">
    <property type="entry name" value="Homeodomain-like_sf"/>
</dbReference>
<dbReference type="InterPro" id="IPR010982">
    <property type="entry name" value="Lambda_DNA-bd_dom_sf"/>
</dbReference>
<dbReference type="InterPro" id="IPR013847">
    <property type="entry name" value="POU"/>
</dbReference>
<dbReference type="InterPro" id="IPR000327">
    <property type="entry name" value="POU_dom"/>
</dbReference>
<dbReference type="InterPro" id="IPR050255">
    <property type="entry name" value="POU_domain_TF"/>
</dbReference>
<dbReference type="PANTHER" id="PTHR11636:SF70">
    <property type="entry name" value="INHIBITORY POU PROTEIN"/>
    <property type="match status" value="1"/>
</dbReference>
<dbReference type="PANTHER" id="PTHR11636">
    <property type="entry name" value="POU DOMAIN"/>
    <property type="match status" value="1"/>
</dbReference>
<dbReference type="Pfam" id="PF00046">
    <property type="entry name" value="Homeodomain"/>
    <property type="match status" value="1"/>
</dbReference>
<dbReference type="Pfam" id="PF00157">
    <property type="entry name" value="Pou"/>
    <property type="match status" value="1"/>
</dbReference>
<dbReference type="PRINTS" id="PR00028">
    <property type="entry name" value="POUDOMAIN"/>
</dbReference>
<dbReference type="SMART" id="SM00389">
    <property type="entry name" value="HOX"/>
    <property type="match status" value="1"/>
</dbReference>
<dbReference type="SMART" id="SM00352">
    <property type="entry name" value="POU"/>
    <property type="match status" value="1"/>
</dbReference>
<dbReference type="SUPFAM" id="SSF46689">
    <property type="entry name" value="Homeodomain-like"/>
    <property type="match status" value="1"/>
</dbReference>
<dbReference type="SUPFAM" id="SSF47413">
    <property type="entry name" value="lambda repressor-like DNA-binding domains"/>
    <property type="match status" value="1"/>
</dbReference>
<dbReference type="PROSITE" id="PS00027">
    <property type="entry name" value="HOMEOBOX_1"/>
    <property type="match status" value="1"/>
</dbReference>
<dbReference type="PROSITE" id="PS50071">
    <property type="entry name" value="HOMEOBOX_2"/>
    <property type="match status" value="1"/>
</dbReference>
<dbReference type="PROSITE" id="PS00035">
    <property type="entry name" value="POU_1"/>
    <property type="match status" value="1"/>
</dbReference>
<dbReference type="PROSITE" id="PS00465">
    <property type="entry name" value="POU_2"/>
    <property type="match status" value="1"/>
</dbReference>
<dbReference type="PROSITE" id="PS51179">
    <property type="entry name" value="POU_3"/>
    <property type="match status" value="1"/>
</dbReference>
<sequence>MQNTAPVPTTTTASKMQPFNNSLFGSFDDPILNARAAQVALADIDVKNVPQLTNPLMRPHDMFSYSNYFSGIHDTSAATNIYQGLPSSSEPFDASVVVPTSSDDQMTPLQQVMAMQQSYGAPPPFQYNMTHPFSTTSIASSNNLARYPIAPPTSDMDTDPRQLETFAEHFKQRRIKLGVTQADVGKALAHLKMPGVGSLSQSTICRFESLTLSHNNMVALKPILHSWLEKAEEAMKQKDTIGDINGILPNTDKKRKRTSIAAPEKRELEQFFKQQPRPSGERIASIADRLDLKKNVVRVWFCNQRQKQKRDFRSQFRARSAAAVMGPRVMPVLNGNNSNNNLKQGQTTYNGLPGFFD</sequence>
<proteinExistence type="evidence at protein level"/>
<protein>
    <recommendedName>
        <fullName>Transcription factor unc-86</fullName>
    </recommendedName>
    <alternativeName>
        <fullName>Uncoordinated protein 86</fullName>
    </alternativeName>
</protein>
<keyword id="KW-0025">Alternative splicing</keyword>
<keyword id="KW-0238">DNA-binding</keyword>
<keyword id="KW-0371">Homeobox</keyword>
<keyword id="KW-0524">Neurogenesis</keyword>
<keyword id="KW-0539">Nucleus</keyword>
<keyword id="KW-0552">Olfaction</keyword>
<keyword id="KW-1185">Reference proteome</keyword>
<keyword id="KW-0716">Sensory transduction</keyword>
<keyword id="KW-0804">Transcription</keyword>
<keyword id="KW-0805">Transcription regulation</keyword>